<protein>
    <recommendedName>
        <fullName evidence="1">Protein Vpr</fullName>
    </recommendedName>
    <alternativeName>
        <fullName evidence="1">R ORF protein</fullName>
    </alternativeName>
    <alternativeName>
        <fullName evidence="1">Viral protein R</fullName>
    </alternativeName>
</protein>
<organism>
    <name type="scientific">Human immunodeficiency virus type 1 group M subtype G (isolate 92NG083)</name>
    <name type="common">HIV-1</name>
    <dbReference type="NCBI Taxonomy" id="388825"/>
    <lineage>
        <taxon>Viruses</taxon>
        <taxon>Riboviria</taxon>
        <taxon>Pararnavirae</taxon>
        <taxon>Artverviricota</taxon>
        <taxon>Revtraviricetes</taxon>
        <taxon>Ortervirales</taxon>
        <taxon>Retroviridae</taxon>
        <taxon>Orthoretrovirinae</taxon>
        <taxon>Lentivirus</taxon>
        <taxon>Human immunodeficiency virus type 1</taxon>
    </lineage>
</organism>
<reference key="1">
    <citation type="journal article" date="1998" name="J. Virol.">
        <title>A comprehensive panel of near-full-length clones and reference sequences for non-subtype B isolates of human immunodeficiency virus type 1.</title>
        <authorList>
            <person name="Gao F."/>
            <person name="Robertson D.L."/>
            <person name="Carruthers C.D."/>
            <person name="Morrison S.G."/>
            <person name="Jian B."/>
            <person name="Chen Y."/>
            <person name="Barre-Sinoussi F."/>
            <person name="Girard M."/>
            <person name="Srinivasan A."/>
            <person name="Abimiku A.G."/>
            <person name="Shaw G.M."/>
            <person name="Sharp P.M."/>
            <person name="Hahn B.H."/>
        </authorList>
    </citation>
    <scope>NUCLEOTIDE SEQUENCE [GENOMIC DNA]</scope>
</reference>
<comment type="function">
    <text evidence="1">During virus replication, may deplete host UNG protein, and incude G2-M cell cycle arrest. Acts by targeting specific host proteins for degradation by the 26S proteasome, through association with the cellular CUL4A-DDB1 E3 ligase complex by direct interaction with host VPRPB/DCAF-1. Cell cycle arrest reportedly occurs within hours of infection and is not blocked by antiviral agents, suggesting that it is initiated by the VPR carried into the virion. Additionally, VPR induces apoptosis in a cell cycle dependent manner suggesting that these two effects are mechanistically linked. Detected in the serum and cerebrospinal fluid of AIDS patient, VPR may also induce cell death to bystander cells.</text>
</comment>
<comment type="function">
    <text evidence="1">During virus entry, plays a role in the transport of the viral pre-integration (PIC) complex to the host nucleus. This function is crucial for viral infection of non-dividing macrophages. May act directly at the nuclear pore complex, by binding nucleoporins phenylalanine-glycine (FG)-repeat regions.</text>
</comment>
<comment type="subunit">
    <text evidence="1">Homooligomer, may form homodimer. Interacts with p6-gag region of the Pr55 Gag precursor protein through a (Leu-X-X)4 motif near the C-terminus of the P6gag protein. Interacts with host UNG. May interact with host RAD23A/HHR23A. Interacts with host VPRBP/DCAF1, leading to hijack the CUL4A-RBX1-DDB1-DCAF1/VPRBP complex, mediating ubiquitination of host proteins such as TERT and ZGPAT and arrest of the cell cycle in G2 phase.</text>
</comment>
<comment type="subcellular location">
    <subcellularLocation>
        <location evidence="1">Virion</location>
    </subcellularLocation>
    <subcellularLocation>
        <location evidence="1">Host nucleus</location>
    </subcellularLocation>
    <subcellularLocation>
        <location evidence="1">Host extracellular space</location>
    </subcellularLocation>
    <text evidence="1">Incorporation into virion is dependent on p6 GAG sequences. Lacks a canonical nuclear localization signal, thus import into nucleus may function independently of the human importin pathway. Detected in high quantity in the serum and cerebrospinal fluid of AIDS patient.</text>
</comment>
<comment type="PTM">
    <text evidence="1">Phosphorylated on several residues by host. These phosphorylations regulate VPR activity for the nuclear import of the HIV-1 pre-integration complex.</text>
</comment>
<comment type="miscellaneous">
    <text evidence="1">HIV-1 lineages are divided in three main groups, M (for Major), O (for Outlier), and N (for New, or Non-M, Non-O). The vast majority of strains found worldwide belong to the group M. Group O seems to be endemic to and largely confined to Cameroon and neighboring countries in West Central Africa, where these viruses represent a small minority of HIV-1 strains. The group N is represented by a limited number of isolates from Cameroonian persons. The group M is further subdivided in 9 clades or subtypes (A to D, F to H, J and K).</text>
</comment>
<comment type="similarity">
    <text evidence="1">Belongs to the HIV-1 VPR protein family.</text>
</comment>
<feature type="chain" id="PRO_0000246753" description="Protein Vpr">
    <location>
        <begin position="1"/>
        <end position="96"/>
    </location>
</feature>
<feature type="region of interest" description="Homooligomerization" evidence="1">
    <location>
        <begin position="1"/>
        <end position="42"/>
    </location>
</feature>
<feature type="modified residue" description="Phosphoserine; by host" evidence="1">
    <location>
        <position position="79"/>
    </location>
</feature>
<evidence type="ECO:0000255" key="1">
    <source>
        <dbReference type="HAMAP-Rule" id="MF_04080"/>
    </source>
</evidence>
<accession>O41800</accession>
<gene>
    <name evidence="1" type="primary">vpr</name>
</gene>
<organismHost>
    <name type="scientific">Homo sapiens</name>
    <name type="common">Human</name>
    <dbReference type="NCBI Taxonomy" id="9606"/>
</organismHost>
<proteinExistence type="inferred from homology"/>
<name>VPR_HV19N</name>
<dbReference type="EMBL" id="U88826">
    <property type="protein sequence ID" value="AAC32659.1"/>
    <property type="molecule type" value="Genomic_DNA"/>
</dbReference>
<dbReference type="SMR" id="O41800"/>
<dbReference type="Proteomes" id="UP000128912">
    <property type="component" value="Segment"/>
</dbReference>
<dbReference type="GO" id="GO:0043657">
    <property type="term" value="C:host cell"/>
    <property type="evidence" value="ECO:0007669"/>
    <property type="project" value="GOC"/>
</dbReference>
<dbReference type="GO" id="GO:0042025">
    <property type="term" value="C:host cell nucleus"/>
    <property type="evidence" value="ECO:0007669"/>
    <property type="project" value="UniProtKB-SubCell"/>
</dbReference>
<dbReference type="GO" id="GO:0043655">
    <property type="term" value="C:host extracellular space"/>
    <property type="evidence" value="ECO:0007669"/>
    <property type="project" value="UniProtKB-SubCell"/>
</dbReference>
<dbReference type="GO" id="GO:0044423">
    <property type="term" value="C:virion component"/>
    <property type="evidence" value="ECO:0007669"/>
    <property type="project" value="UniProtKB-UniRule"/>
</dbReference>
<dbReference type="GO" id="GO:0006351">
    <property type="term" value="P:DNA-templated transcription"/>
    <property type="evidence" value="ECO:0007669"/>
    <property type="project" value="UniProtKB-UniRule"/>
</dbReference>
<dbReference type="GO" id="GO:0034220">
    <property type="term" value="P:monoatomic ion transmembrane transport"/>
    <property type="evidence" value="ECO:0007669"/>
    <property type="project" value="UniProtKB-KW"/>
</dbReference>
<dbReference type="GO" id="GO:0051260">
    <property type="term" value="P:protein homooligomerization"/>
    <property type="evidence" value="ECO:0007669"/>
    <property type="project" value="UniProtKB-UniRule"/>
</dbReference>
<dbReference type="GO" id="GO:0006355">
    <property type="term" value="P:regulation of DNA-templated transcription"/>
    <property type="evidence" value="ECO:0007669"/>
    <property type="project" value="UniProtKB-UniRule"/>
</dbReference>
<dbReference type="GO" id="GO:0046718">
    <property type="term" value="P:symbiont entry into host cell"/>
    <property type="evidence" value="ECO:0007669"/>
    <property type="project" value="UniProtKB-KW"/>
</dbReference>
<dbReference type="GO" id="GO:0052151">
    <property type="term" value="P:symbiont-mediated activation of host apoptosis"/>
    <property type="evidence" value="ECO:0007669"/>
    <property type="project" value="UniProtKB-UniRule"/>
</dbReference>
<dbReference type="GO" id="GO:0039592">
    <property type="term" value="P:symbiont-mediated arrest of host cell cycle during G2/M transition"/>
    <property type="evidence" value="ECO:0007669"/>
    <property type="project" value="UniProtKB-UniRule"/>
</dbReference>
<dbReference type="GO" id="GO:0075732">
    <property type="term" value="P:viral penetration into host nucleus"/>
    <property type="evidence" value="ECO:0007669"/>
    <property type="project" value="UniProtKB-UniRule"/>
</dbReference>
<dbReference type="Gene3D" id="6.10.210.10">
    <property type="match status" value="1"/>
</dbReference>
<dbReference type="Gene3D" id="1.20.5.90">
    <property type="entry name" value="VpR/VpX protein, C-terminal domain"/>
    <property type="match status" value="1"/>
</dbReference>
<dbReference type="HAMAP" id="MF_04080">
    <property type="entry name" value="HIV_VPR"/>
    <property type="match status" value="1"/>
</dbReference>
<dbReference type="InterPro" id="IPR000012">
    <property type="entry name" value="RetroV_VpR/X"/>
</dbReference>
<dbReference type="Pfam" id="PF00522">
    <property type="entry name" value="VPR"/>
    <property type="match status" value="1"/>
</dbReference>
<dbReference type="PRINTS" id="PR00444">
    <property type="entry name" value="HIVVPRVPX"/>
</dbReference>
<keyword id="KW-0010">Activator</keyword>
<keyword id="KW-0014">AIDS</keyword>
<keyword id="KW-0053">Apoptosis</keyword>
<keyword id="KW-0131">Cell cycle</keyword>
<keyword id="KW-1079">Host G2/M cell cycle arrest by virus</keyword>
<keyword id="KW-1048">Host nucleus</keyword>
<keyword id="KW-0945">Host-virus interaction</keyword>
<keyword id="KW-0407">Ion channel</keyword>
<keyword id="KW-0406">Ion transport</keyword>
<keyword id="KW-1121">Modulation of host cell cycle by virus</keyword>
<keyword id="KW-0597">Phosphoprotein</keyword>
<keyword id="KW-0804">Transcription</keyword>
<keyword id="KW-0805">Transcription regulation</keyword>
<keyword id="KW-0813">Transport</keyword>
<keyword id="KW-1163">Viral penetration into host nucleus</keyword>
<keyword id="KW-0946">Virion</keyword>
<keyword id="KW-1160">Virus entry into host cell</keyword>
<sequence length="96" mass="11364">MEQAPEDQGPQREPYNEWTLELLEELKNEAVRHFPRPWLHGLGQYIYNTYGDTWEGVEAIIRILQQLLFIHFRIGCQHSRIGITPQRRVRDGPGRP</sequence>